<name>YOHJ_SALPB</name>
<accession>A9N6L5</accession>
<feature type="chain" id="PRO_1000085042" description="UPF0299 membrane protein YohJ">
    <location>
        <begin position="1"/>
        <end position="132"/>
    </location>
</feature>
<feature type="transmembrane region" description="Helical" evidence="1">
    <location>
        <begin position="7"/>
        <end position="27"/>
    </location>
</feature>
<feature type="transmembrane region" description="Helical" evidence="1">
    <location>
        <begin position="31"/>
        <end position="51"/>
    </location>
</feature>
<feature type="transmembrane region" description="Helical" evidence="1">
    <location>
        <begin position="63"/>
        <end position="83"/>
    </location>
</feature>
<feature type="transmembrane region" description="Helical" evidence="1">
    <location>
        <begin position="93"/>
        <end position="113"/>
    </location>
</feature>
<organism>
    <name type="scientific">Salmonella paratyphi B (strain ATCC BAA-1250 / SPB7)</name>
    <dbReference type="NCBI Taxonomy" id="1016998"/>
    <lineage>
        <taxon>Bacteria</taxon>
        <taxon>Pseudomonadati</taxon>
        <taxon>Pseudomonadota</taxon>
        <taxon>Gammaproteobacteria</taxon>
        <taxon>Enterobacterales</taxon>
        <taxon>Enterobacteriaceae</taxon>
        <taxon>Salmonella</taxon>
    </lineage>
</organism>
<reference key="1">
    <citation type="submission" date="2007-11" db="EMBL/GenBank/DDBJ databases">
        <authorList>
            <consortium name="The Salmonella enterica serovar Paratyphi B Genome Sequencing Project"/>
            <person name="McClelland M."/>
            <person name="Sanderson E.K."/>
            <person name="Porwollik S."/>
            <person name="Spieth J."/>
            <person name="Clifton W.S."/>
            <person name="Fulton R."/>
            <person name="Cordes M."/>
            <person name="Wollam A."/>
            <person name="Shah N."/>
            <person name="Pepin K."/>
            <person name="Bhonagiri V."/>
            <person name="Nash W."/>
            <person name="Johnson M."/>
            <person name="Thiruvilangam P."/>
            <person name="Wilson R."/>
        </authorList>
    </citation>
    <scope>NUCLEOTIDE SEQUENCE [LARGE SCALE GENOMIC DNA]</scope>
    <source>
        <strain>ATCC BAA-1250 / SPB7</strain>
    </source>
</reference>
<keyword id="KW-0997">Cell inner membrane</keyword>
<keyword id="KW-1003">Cell membrane</keyword>
<keyword id="KW-0472">Membrane</keyword>
<keyword id="KW-0812">Transmembrane</keyword>
<keyword id="KW-1133">Transmembrane helix</keyword>
<evidence type="ECO:0000255" key="1">
    <source>
        <dbReference type="HAMAP-Rule" id="MF_01144"/>
    </source>
</evidence>
<comment type="subcellular location">
    <subcellularLocation>
        <location evidence="1">Cell inner membrane</location>
        <topology evidence="1">Multi-pass membrane protein</topology>
    </subcellularLocation>
</comment>
<comment type="similarity">
    <text evidence="1">Belongs to the UPF0299 family.</text>
</comment>
<gene>
    <name evidence="1" type="primary">yohJ</name>
    <name type="ordered locus">SPAB_00835</name>
</gene>
<protein>
    <recommendedName>
        <fullName evidence="1">UPF0299 membrane protein YohJ</fullName>
    </recommendedName>
</protein>
<sequence length="132" mass="14614">MSKSLNIIWQYIRAFVLIYACLYAGIFLASLLPITIPGSIIGMLILFVLLALQILPAKWVNPGCYVLIRYMALLFVPIGVGVMQYFDLLRAQFGPVVVSCAISTLVVFVVVSWSSHLIHGERKVVGQKGTKK</sequence>
<proteinExistence type="inferred from homology"/>
<dbReference type="EMBL" id="CP000886">
    <property type="protein sequence ID" value="ABX66259.1"/>
    <property type="molecule type" value="Genomic_DNA"/>
</dbReference>
<dbReference type="RefSeq" id="WP_000045719.1">
    <property type="nucleotide sequence ID" value="NC_010102.1"/>
</dbReference>
<dbReference type="SMR" id="A9N6L5"/>
<dbReference type="KEGG" id="spq:SPAB_00835"/>
<dbReference type="PATRIC" id="fig|1016998.12.peg.782"/>
<dbReference type="HOGENOM" id="CLU_113736_1_1_6"/>
<dbReference type="BioCyc" id="SENT1016998:SPAB_RS03440-MONOMER"/>
<dbReference type="Proteomes" id="UP000008556">
    <property type="component" value="Chromosome"/>
</dbReference>
<dbReference type="GO" id="GO:0005886">
    <property type="term" value="C:plasma membrane"/>
    <property type="evidence" value="ECO:0007669"/>
    <property type="project" value="UniProtKB-SubCell"/>
</dbReference>
<dbReference type="HAMAP" id="MF_01144">
    <property type="entry name" value="UPF0299"/>
    <property type="match status" value="1"/>
</dbReference>
<dbReference type="InterPro" id="IPR005538">
    <property type="entry name" value="LrgA/CidA"/>
</dbReference>
<dbReference type="InterPro" id="IPR022957">
    <property type="entry name" value="Uncharacterised_UPF0299"/>
</dbReference>
<dbReference type="NCBIfam" id="NF002494">
    <property type="entry name" value="PRK01821.1"/>
    <property type="match status" value="1"/>
</dbReference>
<dbReference type="PANTHER" id="PTHR33931">
    <property type="entry name" value="HOLIN-LIKE PROTEIN CIDA-RELATED"/>
    <property type="match status" value="1"/>
</dbReference>
<dbReference type="PANTHER" id="PTHR33931:SF5">
    <property type="entry name" value="UPF0299 MEMBRANE PROTEIN YOHJ"/>
    <property type="match status" value="1"/>
</dbReference>
<dbReference type="Pfam" id="PF03788">
    <property type="entry name" value="LrgA"/>
    <property type="match status" value="1"/>
</dbReference>